<comment type="function">
    <text>In nitrogen-limiting conditions, when the ratio of Gln to 2-ketoglutarate decreases, P-II is uridylylated to P-II-UMP. P-II-UMP allows the deadenylation of glutamine synthetase (GS), thus activating the enzyme. Conversely, in nitrogen excess P-II is deuridylated and promotes the adenylation of GS. P-II indirectly controls the transcription of the GS gene (glnA). P-II prevents NR-II-catalyzed conversion of NR-I to NR-I-phosphate, the transcriptional activator of glnA. When P-II is uridylylated to P-II-UMP, these events are reversed.</text>
</comment>
<comment type="subunit">
    <text evidence="1">Homotrimer.</text>
</comment>
<comment type="similarity">
    <text evidence="2">Belongs to the P(II) protein family.</text>
</comment>
<accession>P21193</accession>
<organism>
    <name type="scientific">Azospirillum brasilense</name>
    <dbReference type="NCBI Taxonomy" id="192"/>
    <lineage>
        <taxon>Bacteria</taxon>
        <taxon>Pseudomonadati</taxon>
        <taxon>Pseudomonadota</taxon>
        <taxon>Alphaproteobacteria</taxon>
        <taxon>Rhodospirillales</taxon>
        <taxon>Azospirillaceae</taxon>
        <taxon>Azospirillum</taxon>
    </lineage>
</organism>
<sequence length="112" mass="12371">MKKIEAIIKPFKLDEVKEALHEVGIKGITVTEAKGFGRQKGHTELYRGAEYVVDFLPKVKIEVVMEDSLVERAIEAIQQAAHTGRIGDGKIFVTPVEEVVRIRTGEKGGDAI</sequence>
<protein>
    <recommendedName>
        <fullName>Nitrogen regulatory protein P-II</fullName>
    </recommendedName>
</protein>
<evidence type="ECO:0000250" key="1"/>
<evidence type="ECO:0000255" key="2">
    <source>
        <dbReference type="PROSITE-ProRule" id="PRU00675"/>
    </source>
</evidence>
<dbReference type="EMBL" id="X51499">
    <property type="protein sequence ID" value="CAA35867.1"/>
    <property type="molecule type" value="Genomic_DNA"/>
</dbReference>
<dbReference type="EMBL" id="M26107">
    <property type="status" value="NOT_ANNOTATED_CDS"/>
    <property type="molecule type" value="Genomic_DNA"/>
</dbReference>
<dbReference type="PIR" id="S13078">
    <property type="entry name" value="S13078"/>
</dbReference>
<dbReference type="RefSeq" id="WP_014240107.1">
    <property type="nucleotide sequence ID" value="NZ_WFKD01000005.1"/>
</dbReference>
<dbReference type="SMR" id="P21193"/>
<dbReference type="IntAct" id="P21193">
    <property type="interactions" value="1"/>
</dbReference>
<dbReference type="MINT" id="P21193"/>
<dbReference type="OrthoDB" id="9802729at2"/>
<dbReference type="GO" id="GO:0005829">
    <property type="term" value="C:cytosol"/>
    <property type="evidence" value="ECO:0007669"/>
    <property type="project" value="TreeGrafter"/>
</dbReference>
<dbReference type="GO" id="GO:0005524">
    <property type="term" value="F:ATP binding"/>
    <property type="evidence" value="ECO:0007669"/>
    <property type="project" value="TreeGrafter"/>
</dbReference>
<dbReference type="GO" id="GO:0030234">
    <property type="term" value="F:enzyme regulator activity"/>
    <property type="evidence" value="ECO:0007669"/>
    <property type="project" value="InterPro"/>
</dbReference>
<dbReference type="GO" id="GO:0009399">
    <property type="term" value="P:nitrogen fixation"/>
    <property type="evidence" value="ECO:0007669"/>
    <property type="project" value="UniProtKB-KW"/>
</dbReference>
<dbReference type="GO" id="GO:0006808">
    <property type="term" value="P:regulation of nitrogen utilization"/>
    <property type="evidence" value="ECO:0007669"/>
    <property type="project" value="InterPro"/>
</dbReference>
<dbReference type="FunFam" id="3.30.70.120:FF:000001">
    <property type="entry name" value="Nitrogen regulatory protein P-II"/>
    <property type="match status" value="1"/>
</dbReference>
<dbReference type="Gene3D" id="3.30.70.120">
    <property type="match status" value="1"/>
</dbReference>
<dbReference type="InterPro" id="IPR002187">
    <property type="entry name" value="N-reg_PII"/>
</dbReference>
<dbReference type="InterPro" id="IPR011322">
    <property type="entry name" value="N-reg_PII-like_a/b"/>
</dbReference>
<dbReference type="InterPro" id="IPR015867">
    <property type="entry name" value="N-reg_PII/ATP_PRibTrfase_C"/>
</dbReference>
<dbReference type="InterPro" id="IPR017918">
    <property type="entry name" value="N-reg_PII_CS"/>
</dbReference>
<dbReference type="InterPro" id="IPR002332">
    <property type="entry name" value="N-reg_PII_urydylation_site"/>
</dbReference>
<dbReference type="PANTHER" id="PTHR30115">
    <property type="entry name" value="NITROGEN REGULATORY PROTEIN P-II"/>
    <property type="match status" value="1"/>
</dbReference>
<dbReference type="PANTHER" id="PTHR30115:SF11">
    <property type="entry name" value="NITROGEN REGULATORY PROTEIN P-II HOMOLOG"/>
    <property type="match status" value="1"/>
</dbReference>
<dbReference type="Pfam" id="PF00543">
    <property type="entry name" value="P-II"/>
    <property type="match status" value="1"/>
</dbReference>
<dbReference type="PIRSF" id="PIRSF039144">
    <property type="entry name" value="GlnB"/>
    <property type="match status" value="1"/>
</dbReference>
<dbReference type="PRINTS" id="PR00340">
    <property type="entry name" value="PIIGLNB"/>
</dbReference>
<dbReference type="SMART" id="SM00938">
    <property type="entry name" value="P-II"/>
    <property type="match status" value="1"/>
</dbReference>
<dbReference type="SUPFAM" id="SSF54913">
    <property type="entry name" value="GlnB-like"/>
    <property type="match status" value="1"/>
</dbReference>
<dbReference type="PROSITE" id="PS00638">
    <property type="entry name" value="PII_GLNB_CTER"/>
    <property type="match status" value="1"/>
</dbReference>
<dbReference type="PROSITE" id="PS51343">
    <property type="entry name" value="PII_GLNB_DOM"/>
    <property type="match status" value="1"/>
</dbReference>
<dbReference type="PROSITE" id="PS00496">
    <property type="entry name" value="PII_GLNB_UMP"/>
    <property type="match status" value="1"/>
</dbReference>
<proteinExistence type="inferred from homology"/>
<gene>
    <name type="primary">glnB</name>
</gene>
<feature type="chain" id="PRO_0000139769" description="Nitrogen regulatory protein P-II">
    <location>
        <begin position="1"/>
        <end position="112"/>
    </location>
</feature>
<feature type="modified residue" description="O-UMP-tyrosine" evidence="2">
    <location>
        <position position="51"/>
    </location>
</feature>
<reference key="1">
    <citation type="journal article" date="1990" name="Mol. Gen. Genet.">
        <title>Characterization of three different nitrogen-regulated promoter regions for the expression of glnB and glnA in Azospirillum brasilense.</title>
        <authorList>
            <person name="de Zamaroczy M."/>
            <person name="Delorme F."/>
            <person name="Elmerich C."/>
        </authorList>
    </citation>
    <scope>NUCLEOTIDE SEQUENCE [GENOMIC DNA]</scope>
    <source>
        <strain>ATCC 29145 / DSM 1690 / IMET 11303 / Sp7</strain>
    </source>
</reference>
<reference key="2">
    <citation type="journal article" date="1986" name="Biochimie">
        <title>Nucleotide sequence of the Azospirillum brasilense Sp7 glutamine synthetase structural gene.</title>
        <authorList>
            <person name="Bozouklian H."/>
            <person name="Elmerich C."/>
        </authorList>
    </citation>
    <scope>NUCLEOTIDE SEQUENCE [GENOMIC DNA] OF 88-112</scope>
    <source>
        <strain>ATCC 29145 / DSM 1690 / IMET 11303 / Sp7</strain>
    </source>
</reference>
<name>GLNB_AZOBR</name>
<keyword id="KW-0535">Nitrogen fixation</keyword>
<keyword id="KW-0547">Nucleotide-binding</keyword>
<keyword id="KW-0597">Phosphoprotein</keyword>
<keyword id="KW-0804">Transcription</keyword>
<keyword id="KW-0805">Transcription regulation</keyword>